<evidence type="ECO:0000255" key="1">
    <source>
        <dbReference type="HAMAP-Rule" id="MF_01678"/>
    </source>
</evidence>
<evidence type="ECO:0000305" key="2"/>
<proteinExistence type="inferred from homology"/>
<sequence length="370" mass="40532">MRDIDPSLRREIESLERFLKVKPLYFDFDEGVFVWLDTRLIPFREVYRRTSDYRRVARAIVDMEIRGAPAIGVAAAYALALAAAEAASRGGEGFIEALSEARREIESTRPTAYNLFWATARVYGAVSEAFRRSGVDAAVRAGLEEATRIYVEDVRGNVEIGRVGARLLESGDTVLTHCNTGALATAGFGTALGVIRYAWMEGKDIRVITTETRPVLQGARLNVWELRKEGIPFKLVVDSAVGLIMSRGMVSKAIVGADRIVSTGHTANKIGTYMVAMAASRHGVPFYVAAPASTFQPDAGPEAIVIEERSPDEVRGVISEAGYVRITLGDVEAYNPSFDVTPPELITAFITDRGVIEPPFDVNIRRTLED</sequence>
<accession>Q9YE84</accession>
<comment type="function">
    <text evidence="1">Catalyzes the interconversion of methylthioribose-1-phosphate (MTR-1-P) into methylthioribulose-1-phosphate (MTRu-1-P).</text>
</comment>
<comment type="catalytic activity">
    <reaction evidence="1">
        <text>5-(methylsulfanyl)-alpha-D-ribose 1-phosphate = 5-(methylsulfanyl)-D-ribulose 1-phosphate</text>
        <dbReference type="Rhea" id="RHEA:19989"/>
        <dbReference type="ChEBI" id="CHEBI:58533"/>
        <dbReference type="ChEBI" id="CHEBI:58548"/>
        <dbReference type="EC" id="5.3.1.23"/>
    </reaction>
</comment>
<comment type="similarity">
    <text evidence="2">Belongs to the eIF-2B alpha/beta/delta subunits family. MtnA subfamily.</text>
</comment>
<protein>
    <recommendedName>
        <fullName evidence="1">Putative methylthioribose-1-phosphate isomerase</fullName>
        <shortName evidence="1">M1Pi</shortName>
        <shortName evidence="1">MTR-1-P isomerase</shortName>
        <ecNumber evidence="1">5.3.1.23</ecNumber>
    </recommendedName>
    <alternativeName>
        <fullName evidence="1">MTNA-like protein</fullName>
        <shortName evidence="1">aMTNA</shortName>
    </alternativeName>
    <alternativeName>
        <fullName evidence="1">S-methyl-5-thioribose-1-phosphate isomerase</fullName>
    </alternativeName>
</protein>
<reference key="1">
    <citation type="journal article" date="1999" name="DNA Res.">
        <title>Complete genome sequence of an aerobic hyper-thermophilic crenarchaeon, Aeropyrum pernix K1.</title>
        <authorList>
            <person name="Kawarabayasi Y."/>
            <person name="Hino Y."/>
            <person name="Horikawa H."/>
            <person name="Yamazaki S."/>
            <person name="Haikawa Y."/>
            <person name="Jin-no K."/>
            <person name="Takahashi M."/>
            <person name="Sekine M."/>
            <person name="Baba S."/>
            <person name="Ankai A."/>
            <person name="Kosugi H."/>
            <person name="Hosoyama A."/>
            <person name="Fukui S."/>
            <person name="Nagai Y."/>
            <person name="Nishijima K."/>
            <person name="Nakazawa H."/>
            <person name="Takamiya M."/>
            <person name="Masuda S."/>
            <person name="Funahashi T."/>
            <person name="Tanaka T."/>
            <person name="Kudoh Y."/>
            <person name="Yamazaki J."/>
            <person name="Kushida N."/>
            <person name="Oguchi A."/>
            <person name="Aoki K."/>
            <person name="Kubota K."/>
            <person name="Nakamura Y."/>
            <person name="Nomura N."/>
            <person name="Sako Y."/>
            <person name="Kikuchi H."/>
        </authorList>
    </citation>
    <scope>NUCLEOTIDE SEQUENCE [LARGE SCALE GENOMIC DNA]</scope>
    <source>
        <strain>ATCC 700893 / DSM 11879 / JCM 9820 / NBRC 100138 / K1</strain>
    </source>
</reference>
<keyword id="KW-0028">Amino-acid biosynthesis</keyword>
<keyword id="KW-0413">Isomerase</keyword>
<keyword id="KW-0486">Methionine biosynthesis</keyword>
<keyword id="KW-1185">Reference proteome</keyword>
<organism>
    <name type="scientific">Aeropyrum pernix (strain ATCC 700893 / DSM 11879 / JCM 9820 / NBRC 100138 / K1)</name>
    <dbReference type="NCBI Taxonomy" id="272557"/>
    <lineage>
        <taxon>Archaea</taxon>
        <taxon>Thermoproteota</taxon>
        <taxon>Thermoprotei</taxon>
        <taxon>Desulfurococcales</taxon>
        <taxon>Desulfurococcaceae</taxon>
        <taxon>Aeropyrum</taxon>
    </lineage>
</organism>
<name>MTNA_AERPE</name>
<gene>
    <name type="ordered locus">APE_0686</name>
</gene>
<feature type="chain" id="PRO_0000156084" description="Putative methylthioribose-1-phosphate isomerase">
    <location>
        <begin position="1"/>
        <end position="370"/>
    </location>
</feature>
<feature type="active site" description="Proton donor" evidence="1">
    <location>
        <position position="258"/>
    </location>
</feature>
<feature type="binding site" evidence="1">
    <location>
        <begin position="66"/>
        <end position="68"/>
    </location>
    <ligand>
        <name>substrate</name>
    </ligand>
</feature>
<feature type="binding site" evidence="1">
    <location>
        <position position="109"/>
    </location>
    <ligand>
        <name>substrate</name>
    </ligand>
</feature>
<feature type="binding site" evidence="1">
    <location>
        <position position="217"/>
    </location>
    <ligand>
        <name>substrate</name>
    </ligand>
</feature>
<feature type="binding site" evidence="1">
    <location>
        <begin position="268"/>
        <end position="269"/>
    </location>
    <ligand>
        <name>substrate</name>
    </ligand>
</feature>
<feature type="site" description="Transition state stabilizer" evidence="1">
    <location>
        <position position="178"/>
    </location>
</feature>
<dbReference type="EC" id="5.3.1.23" evidence="1"/>
<dbReference type="EMBL" id="BA000002">
    <property type="protein sequence ID" value="BAA79662.1"/>
    <property type="molecule type" value="Genomic_DNA"/>
</dbReference>
<dbReference type="PIR" id="F72657">
    <property type="entry name" value="F72657"/>
</dbReference>
<dbReference type="RefSeq" id="WP_010865906.1">
    <property type="nucleotide sequence ID" value="NC_000854.2"/>
</dbReference>
<dbReference type="SMR" id="Q9YE84"/>
<dbReference type="STRING" id="272557.APE_0686"/>
<dbReference type="EnsemblBacteria" id="BAA79662">
    <property type="protein sequence ID" value="BAA79662"/>
    <property type="gene ID" value="APE_0686"/>
</dbReference>
<dbReference type="GeneID" id="1444821"/>
<dbReference type="KEGG" id="ape:APE_0686"/>
<dbReference type="PATRIC" id="fig|272557.25.peg.495"/>
<dbReference type="eggNOG" id="arCOG01123">
    <property type="taxonomic scope" value="Archaea"/>
</dbReference>
<dbReference type="Proteomes" id="UP000002518">
    <property type="component" value="Chromosome"/>
</dbReference>
<dbReference type="GO" id="GO:0046523">
    <property type="term" value="F:S-methyl-5-thioribose-1-phosphate isomerase activity"/>
    <property type="evidence" value="ECO:0007669"/>
    <property type="project" value="UniProtKB-UniRule"/>
</dbReference>
<dbReference type="GO" id="GO:0019509">
    <property type="term" value="P:L-methionine salvage from methylthioadenosine"/>
    <property type="evidence" value="ECO:0007669"/>
    <property type="project" value="UniProtKB-UniRule"/>
</dbReference>
<dbReference type="FunFam" id="3.40.50.10470:FF:000006">
    <property type="entry name" value="Methylthioribose-1-phosphate isomerase"/>
    <property type="match status" value="1"/>
</dbReference>
<dbReference type="Gene3D" id="1.20.120.420">
    <property type="entry name" value="translation initiation factor eif-2b, domain 1"/>
    <property type="match status" value="1"/>
</dbReference>
<dbReference type="Gene3D" id="3.40.50.10470">
    <property type="entry name" value="Translation initiation factor eif-2b, domain 2"/>
    <property type="match status" value="1"/>
</dbReference>
<dbReference type="HAMAP" id="MF_01678">
    <property type="entry name" value="Salvage_MtnA"/>
    <property type="match status" value="1"/>
</dbReference>
<dbReference type="InterPro" id="IPR000649">
    <property type="entry name" value="IF-2B-related"/>
</dbReference>
<dbReference type="InterPro" id="IPR005251">
    <property type="entry name" value="IF-M1Pi"/>
</dbReference>
<dbReference type="InterPro" id="IPR042529">
    <property type="entry name" value="IF_2B-like_C"/>
</dbReference>
<dbReference type="InterPro" id="IPR011559">
    <property type="entry name" value="Initiation_fac_2B_a/b/d"/>
</dbReference>
<dbReference type="InterPro" id="IPR027363">
    <property type="entry name" value="M1Pi_N"/>
</dbReference>
<dbReference type="InterPro" id="IPR037171">
    <property type="entry name" value="NagB/RpiA_transferase-like"/>
</dbReference>
<dbReference type="NCBIfam" id="TIGR00524">
    <property type="entry name" value="eIF-2B_rel"/>
    <property type="match status" value="1"/>
</dbReference>
<dbReference type="NCBIfam" id="NF004326">
    <property type="entry name" value="PRK05720.1"/>
    <property type="match status" value="1"/>
</dbReference>
<dbReference type="NCBIfam" id="TIGR00512">
    <property type="entry name" value="salvage_mtnA"/>
    <property type="match status" value="1"/>
</dbReference>
<dbReference type="PANTHER" id="PTHR43475">
    <property type="entry name" value="METHYLTHIORIBOSE-1-PHOSPHATE ISOMERASE"/>
    <property type="match status" value="1"/>
</dbReference>
<dbReference type="PANTHER" id="PTHR43475:SF1">
    <property type="entry name" value="METHYLTHIORIBOSE-1-PHOSPHATE ISOMERASE"/>
    <property type="match status" value="1"/>
</dbReference>
<dbReference type="Pfam" id="PF01008">
    <property type="entry name" value="IF-2B"/>
    <property type="match status" value="1"/>
</dbReference>
<dbReference type="SUPFAM" id="SSF100950">
    <property type="entry name" value="NagB/RpiA/CoA transferase-like"/>
    <property type="match status" value="1"/>
</dbReference>